<evidence type="ECO:0000250" key="1">
    <source>
        <dbReference type="UniProtKB" id="P12980"/>
    </source>
</evidence>
<evidence type="ECO:0000255" key="2">
    <source>
        <dbReference type="PROSITE-ProRule" id="PRU00981"/>
    </source>
</evidence>
<evidence type="ECO:0000256" key="3">
    <source>
        <dbReference type="SAM" id="MobiDB-lite"/>
    </source>
</evidence>
<evidence type="ECO:0000305" key="4"/>
<name>LYL1_MOUSE</name>
<comment type="subunit">
    <text>Efficient DNA binding requires dimerization with another bHLH protein.</text>
</comment>
<comment type="subcellular location">
    <subcellularLocation>
        <location evidence="2">Nucleus</location>
    </subcellularLocation>
</comment>
<gene>
    <name type="primary">Lyl1</name>
    <name type="synonym">Lyl-1</name>
</gene>
<feature type="chain" id="PRO_0000127263" description="Protein lyl-1">
    <location>
        <begin position="1"/>
        <end position="278"/>
    </location>
</feature>
<feature type="domain" description="bHLH" evidence="2">
    <location>
        <begin position="149"/>
        <end position="201"/>
    </location>
</feature>
<feature type="region of interest" description="Disordered" evidence="3">
    <location>
        <begin position="1"/>
        <end position="46"/>
    </location>
</feature>
<feature type="region of interest" description="Disordered" evidence="3">
    <location>
        <begin position="212"/>
        <end position="278"/>
    </location>
</feature>
<feature type="compositionally biased region" description="Pro residues" evidence="3">
    <location>
        <begin position="27"/>
        <end position="37"/>
    </location>
</feature>
<feature type="compositionally biased region" description="Polar residues" evidence="3">
    <location>
        <begin position="269"/>
        <end position="278"/>
    </location>
</feature>
<feature type="modified residue" description="Phosphoserine" evidence="1">
    <location>
        <position position="274"/>
    </location>
</feature>
<feature type="sequence conflict" description="In Ref. 1; CAA40870, 3; CAJ18375, 6; EDL10953 and 7; AAH05736." evidence="4" ref="1 3 6 7">
    <original>R</original>
    <variation>G</variation>
    <location>
        <position position="7"/>
    </location>
</feature>
<feature type="sequence conflict" description="In Ref. 1; CAA40870, 6; EDL10953 and 7; AAH05736." evidence="4" ref="1 6 7">
    <original>P</original>
    <variation>L</variation>
    <location>
        <position position="34"/>
    </location>
</feature>
<feature type="sequence conflict" description="In Ref. 2; CAA38896." evidence="4" ref="2">
    <original>S</original>
    <variation>R</variation>
    <location>
        <position position="111"/>
    </location>
</feature>
<feature type="sequence conflict" description="In Ref. 1; CAA40870, 6; EDL10953 and 7; AAH05736." evidence="4" ref="1 6 7">
    <original>G</original>
    <variation>E</variation>
    <location>
        <position position="239"/>
    </location>
</feature>
<organism>
    <name type="scientific">Mus musculus</name>
    <name type="common">Mouse</name>
    <dbReference type="NCBI Taxonomy" id="10090"/>
    <lineage>
        <taxon>Eukaryota</taxon>
        <taxon>Metazoa</taxon>
        <taxon>Chordata</taxon>
        <taxon>Craniata</taxon>
        <taxon>Vertebrata</taxon>
        <taxon>Euteleostomi</taxon>
        <taxon>Mammalia</taxon>
        <taxon>Eutheria</taxon>
        <taxon>Euarchontoglires</taxon>
        <taxon>Glires</taxon>
        <taxon>Rodentia</taxon>
        <taxon>Myomorpha</taxon>
        <taxon>Muroidea</taxon>
        <taxon>Muridae</taxon>
        <taxon>Murinae</taxon>
        <taxon>Mus</taxon>
        <taxon>Mus</taxon>
    </lineage>
</organism>
<sequence>MCPPQARAEVGSAMTEKTEMVCASSPAPAPPSKPASPGPLSTEEVDHRNTCTPWLPPGVPVINLGHTRPIGAAMPTTELSAFRPSLLQLTALGRAPPTLAVHYHPHPFLNSVYIGPAGPFSIFPNSRLKRRPSHSELDLADGHQPQKVARRVFTNSRERWRQQHVNGAFAELRKLLPTHPPDRKLSKNEVLRLAMKYIGFLVRLLRDQTAVLTSGPSAPGSRKPPARRGVEGSARFGAGHRVEAARSQPVLPGDCDGDPNGSVRPIKLEQTSLSPEVR</sequence>
<proteinExistence type="evidence at transcript level"/>
<reference key="1">
    <citation type="journal article" date="1991" name="Oncogene">
        <title>Differential expression of the LYL, SCL and E2A helix-loop-helix genes within the hemopoietic system.</title>
        <authorList>
            <person name="Visvader J."/>
            <person name="Begley C.G."/>
            <person name="Adams J.M."/>
        </authorList>
    </citation>
    <scope>NUCLEOTIDE SEQUENCE [MRNA]</scope>
</reference>
<reference key="2">
    <citation type="journal article" date="1991" name="Oncogene">
        <title>Structure, chromosome mapping, and expression of the mouse Lyl-1 gene.</title>
        <authorList>
            <person name="Kuo S.S."/>
            <person name="Mellentin J.D."/>
            <person name="Copeland N.G."/>
            <person name="Gilbert D.J."/>
            <person name="Jenkins N.A."/>
            <person name="Cleary M.L."/>
        </authorList>
    </citation>
    <scope>NUCLEOTIDE SEQUENCE [GENOMIC DNA]</scope>
    <source>
        <strain>BIOA</strain>
        <tissue>Liver</tissue>
    </source>
</reference>
<reference key="3">
    <citation type="submission" date="2005-07" db="EMBL/GenBank/DDBJ databases">
        <title>Cloning of mouse full open reading frames in Gateway(R) system entry vector (pDONR201).</title>
        <authorList>
            <person name="Ebert L."/>
            <person name="Muenstermann E."/>
            <person name="Schatten R."/>
            <person name="Henze S."/>
            <person name="Bohn E."/>
            <person name="Mollenhauer J."/>
            <person name="Wiemann S."/>
            <person name="Schick M."/>
            <person name="Korn B."/>
        </authorList>
    </citation>
    <scope>NUCLEOTIDE SEQUENCE [LARGE SCALE MRNA]</scope>
</reference>
<reference key="4">
    <citation type="journal article" date="2005" name="Science">
        <title>The transcriptional landscape of the mammalian genome.</title>
        <authorList>
            <person name="Carninci P."/>
            <person name="Kasukawa T."/>
            <person name="Katayama S."/>
            <person name="Gough J."/>
            <person name="Frith M.C."/>
            <person name="Maeda N."/>
            <person name="Oyama R."/>
            <person name="Ravasi T."/>
            <person name="Lenhard B."/>
            <person name="Wells C."/>
            <person name="Kodzius R."/>
            <person name="Shimokawa K."/>
            <person name="Bajic V.B."/>
            <person name="Brenner S.E."/>
            <person name="Batalov S."/>
            <person name="Forrest A.R."/>
            <person name="Zavolan M."/>
            <person name="Davis M.J."/>
            <person name="Wilming L.G."/>
            <person name="Aidinis V."/>
            <person name="Allen J.E."/>
            <person name="Ambesi-Impiombato A."/>
            <person name="Apweiler R."/>
            <person name="Aturaliya R.N."/>
            <person name="Bailey T.L."/>
            <person name="Bansal M."/>
            <person name="Baxter L."/>
            <person name="Beisel K.W."/>
            <person name="Bersano T."/>
            <person name="Bono H."/>
            <person name="Chalk A.M."/>
            <person name="Chiu K.P."/>
            <person name="Choudhary V."/>
            <person name="Christoffels A."/>
            <person name="Clutterbuck D.R."/>
            <person name="Crowe M.L."/>
            <person name="Dalla E."/>
            <person name="Dalrymple B.P."/>
            <person name="de Bono B."/>
            <person name="Della Gatta G."/>
            <person name="di Bernardo D."/>
            <person name="Down T."/>
            <person name="Engstrom P."/>
            <person name="Fagiolini M."/>
            <person name="Faulkner G."/>
            <person name="Fletcher C.F."/>
            <person name="Fukushima T."/>
            <person name="Furuno M."/>
            <person name="Futaki S."/>
            <person name="Gariboldi M."/>
            <person name="Georgii-Hemming P."/>
            <person name="Gingeras T.R."/>
            <person name="Gojobori T."/>
            <person name="Green R.E."/>
            <person name="Gustincich S."/>
            <person name="Harbers M."/>
            <person name="Hayashi Y."/>
            <person name="Hensch T.K."/>
            <person name="Hirokawa N."/>
            <person name="Hill D."/>
            <person name="Huminiecki L."/>
            <person name="Iacono M."/>
            <person name="Ikeo K."/>
            <person name="Iwama A."/>
            <person name="Ishikawa T."/>
            <person name="Jakt M."/>
            <person name="Kanapin A."/>
            <person name="Katoh M."/>
            <person name="Kawasawa Y."/>
            <person name="Kelso J."/>
            <person name="Kitamura H."/>
            <person name="Kitano H."/>
            <person name="Kollias G."/>
            <person name="Krishnan S.P."/>
            <person name="Kruger A."/>
            <person name="Kummerfeld S.K."/>
            <person name="Kurochkin I.V."/>
            <person name="Lareau L.F."/>
            <person name="Lazarevic D."/>
            <person name="Lipovich L."/>
            <person name="Liu J."/>
            <person name="Liuni S."/>
            <person name="McWilliam S."/>
            <person name="Madan Babu M."/>
            <person name="Madera M."/>
            <person name="Marchionni L."/>
            <person name="Matsuda H."/>
            <person name="Matsuzawa S."/>
            <person name="Miki H."/>
            <person name="Mignone F."/>
            <person name="Miyake S."/>
            <person name="Morris K."/>
            <person name="Mottagui-Tabar S."/>
            <person name="Mulder N."/>
            <person name="Nakano N."/>
            <person name="Nakauchi H."/>
            <person name="Ng P."/>
            <person name="Nilsson R."/>
            <person name="Nishiguchi S."/>
            <person name="Nishikawa S."/>
            <person name="Nori F."/>
            <person name="Ohara O."/>
            <person name="Okazaki Y."/>
            <person name="Orlando V."/>
            <person name="Pang K.C."/>
            <person name="Pavan W.J."/>
            <person name="Pavesi G."/>
            <person name="Pesole G."/>
            <person name="Petrovsky N."/>
            <person name="Piazza S."/>
            <person name="Reed J."/>
            <person name="Reid J.F."/>
            <person name="Ring B.Z."/>
            <person name="Ringwald M."/>
            <person name="Rost B."/>
            <person name="Ruan Y."/>
            <person name="Salzberg S.L."/>
            <person name="Sandelin A."/>
            <person name="Schneider C."/>
            <person name="Schoenbach C."/>
            <person name="Sekiguchi K."/>
            <person name="Semple C.A."/>
            <person name="Seno S."/>
            <person name="Sessa L."/>
            <person name="Sheng Y."/>
            <person name="Shibata Y."/>
            <person name="Shimada H."/>
            <person name="Shimada K."/>
            <person name="Silva D."/>
            <person name="Sinclair B."/>
            <person name="Sperling S."/>
            <person name="Stupka E."/>
            <person name="Sugiura K."/>
            <person name="Sultana R."/>
            <person name="Takenaka Y."/>
            <person name="Taki K."/>
            <person name="Tammoja K."/>
            <person name="Tan S.L."/>
            <person name="Tang S."/>
            <person name="Taylor M.S."/>
            <person name="Tegner J."/>
            <person name="Teichmann S.A."/>
            <person name="Ueda H.R."/>
            <person name="van Nimwegen E."/>
            <person name="Verardo R."/>
            <person name="Wei C.L."/>
            <person name="Yagi K."/>
            <person name="Yamanishi H."/>
            <person name="Zabarovsky E."/>
            <person name="Zhu S."/>
            <person name="Zimmer A."/>
            <person name="Hide W."/>
            <person name="Bult C."/>
            <person name="Grimmond S.M."/>
            <person name="Teasdale R.D."/>
            <person name="Liu E.T."/>
            <person name="Brusic V."/>
            <person name="Quackenbush J."/>
            <person name="Wahlestedt C."/>
            <person name="Mattick J.S."/>
            <person name="Hume D.A."/>
            <person name="Kai C."/>
            <person name="Sasaki D."/>
            <person name="Tomaru Y."/>
            <person name="Fukuda S."/>
            <person name="Kanamori-Katayama M."/>
            <person name="Suzuki M."/>
            <person name="Aoki J."/>
            <person name="Arakawa T."/>
            <person name="Iida J."/>
            <person name="Imamura K."/>
            <person name="Itoh M."/>
            <person name="Kato T."/>
            <person name="Kawaji H."/>
            <person name="Kawagashira N."/>
            <person name="Kawashima T."/>
            <person name="Kojima M."/>
            <person name="Kondo S."/>
            <person name="Konno H."/>
            <person name="Nakano K."/>
            <person name="Ninomiya N."/>
            <person name="Nishio T."/>
            <person name="Okada M."/>
            <person name="Plessy C."/>
            <person name="Shibata K."/>
            <person name="Shiraki T."/>
            <person name="Suzuki S."/>
            <person name="Tagami M."/>
            <person name="Waki K."/>
            <person name="Watahiki A."/>
            <person name="Okamura-Oho Y."/>
            <person name="Suzuki H."/>
            <person name="Kawai J."/>
            <person name="Hayashizaki Y."/>
        </authorList>
    </citation>
    <scope>NUCLEOTIDE SEQUENCE [LARGE SCALE MRNA]</scope>
    <source>
        <strain>C57BL/6J</strain>
    </source>
</reference>
<reference key="5">
    <citation type="journal article" date="2009" name="PLoS Biol.">
        <title>Lineage-specific biology revealed by a finished genome assembly of the mouse.</title>
        <authorList>
            <person name="Church D.M."/>
            <person name="Goodstadt L."/>
            <person name="Hillier L.W."/>
            <person name="Zody M.C."/>
            <person name="Goldstein S."/>
            <person name="She X."/>
            <person name="Bult C.J."/>
            <person name="Agarwala R."/>
            <person name="Cherry J.L."/>
            <person name="DiCuccio M."/>
            <person name="Hlavina W."/>
            <person name="Kapustin Y."/>
            <person name="Meric P."/>
            <person name="Maglott D."/>
            <person name="Birtle Z."/>
            <person name="Marques A.C."/>
            <person name="Graves T."/>
            <person name="Zhou S."/>
            <person name="Teague B."/>
            <person name="Potamousis K."/>
            <person name="Churas C."/>
            <person name="Place M."/>
            <person name="Herschleb J."/>
            <person name="Runnheim R."/>
            <person name="Forrest D."/>
            <person name="Amos-Landgraf J."/>
            <person name="Schwartz D.C."/>
            <person name="Cheng Z."/>
            <person name="Lindblad-Toh K."/>
            <person name="Eichler E.E."/>
            <person name="Ponting C.P."/>
        </authorList>
    </citation>
    <scope>NUCLEOTIDE SEQUENCE [LARGE SCALE GENOMIC DNA]</scope>
    <source>
        <strain>C57BL/6J</strain>
    </source>
</reference>
<reference key="6">
    <citation type="submission" date="2005-07" db="EMBL/GenBank/DDBJ databases">
        <authorList>
            <person name="Mural R.J."/>
            <person name="Adams M.D."/>
            <person name="Myers E.W."/>
            <person name="Smith H.O."/>
            <person name="Venter J.C."/>
        </authorList>
    </citation>
    <scope>NUCLEOTIDE SEQUENCE [LARGE SCALE GENOMIC DNA]</scope>
</reference>
<reference key="7">
    <citation type="journal article" date="2004" name="Genome Res.">
        <title>The status, quality, and expansion of the NIH full-length cDNA project: the Mammalian Gene Collection (MGC).</title>
        <authorList>
            <consortium name="The MGC Project Team"/>
        </authorList>
    </citation>
    <scope>NUCLEOTIDE SEQUENCE [LARGE SCALE MRNA]</scope>
    <source>
        <strain>FVB/N</strain>
        <tissue>Mammary tumor</tissue>
    </source>
</reference>
<accession>P27792</accession>
<accession>Q4FK84</accession>
<accession>Q8BPE2</accession>
<accession>Q923F0</accession>
<keyword id="KW-0238">DNA-binding</keyword>
<keyword id="KW-0539">Nucleus</keyword>
<keyword id="KW-0597">Phosphoprotein</keyword>
<keyword id="KW-1185">Reference proteome</keyword>
<keyword id="KW-0804">Transcription</keyword>
<keyword id="KW-0805">Transcription regulation</keyword>
<dbReference type="EMBL" id="X57687">
    <property type="protein sequence ID" value="CAA40870.1"/>
    <property type="molecule type" value="mRNA"/>
</dbReference>
<dbReference type="EMBL" id="X55055">
    <property type="protein sequence ID" value="CAA38896.1"/>
    <property type="molecule type" value="Genomic_DNA"/>
</dbReference>
<dbReference type="EMBL" id="CT010167">
    <property type="protein sequence ID" value="CAJ18375.1"/>
    <property type="molecule type" value="mRNA"/>
</dbReference>
<dbReference type="EMBL" id="AK076114">
    <property type="protein sequence ID" value="BAC36194.1"/>
    <property type="molecule type" value="mRNA"/>
</dbReference>
<dbReference type="EMBL" id="AC145556">
    <property type="status" value="NOT_ANNOTATED_CDS"/>
    <property type="molecule type" value="Genomic_DNA"/>
</dbReference>
<dbReference type="EMBL" id="CH466525">
    <property type="protein sequence ID" value="EDL10953.1"/>
    <property type="molecule type" value="Genomic_DNA"/>
</dbReference>
<dbReference type="EMBL" id="BC005736">
    <property type="protein sequence ID" value="AAH05736.1"/>
    <property type="molecule type" value="mRNA"/>
</dbReference>
<dbReference type="CCDS" id="CCDS22476.1"/>
<dbReference type="PIR" id="S16678">
    <property type="entry name" value="S16678"/>
</dbReference>
<dbReference type="RefSeq" id="NP_032561.2">
    <property type="nucleotide sequence ID" value="NM_008535.2"/>
</dbReference>
<dbReference type="RefSeq" id="XP_006530807.1">
    <property type="nucleotide sequence ID" value="XM_006530744.4"/>
</dbReference>
<dbReference type="SMR" id="P27792"/>
<dbReference type="FunCoup" id="P27792">
    <property type="interactions" value="126"/>
</dbReference>
<dbReference type="STRING" id="10090.ENSMUSP00000046010"/>
<dbReference type="GlyGen" id="P27792">
    <property type="glycosylation" value="1 site, 1 O-linked glycan (1 site)"/>
</dbReference>
<dbReference type="iPTMnet" id="P27792"/>
<dbReference type="PhosphoSitePlus" id="P27792"/>
<dbReference type="PaxDb" id="10090-ENSMUSP00000046010"/>
<dbReference type="PeptideAtlas" id="P27792"/>
<dbReference type="ProteomicsDB" id="290202"/>
<dbReference type="ABCD" id="P27792">
    <property type="antibodies" value="1 sequenced antibody"/>
</dbReference>
<dbReference type="Antibodypedia" id="26353">
    <property type="antibodies" value="167 antibodies from 26 providers"/>
</dbReference>
<dbReference type="DNASU" id="17095"/>
<dbReference type="Ensembl" id="ENSMUST00000037165.6">
    <property type="protein sequence ID" value="ENSMUSP00000046010.5"/>
    <property type="gene ID" value="ENSMUSG00000034041.6"/>
</dbReference>
<dbReference type="GeneID" id="17095"/>
<dbReference type="KEGG" id="mmu:17095"/>
<dbReference type="UCSC" id="uc009mnb.1">
    <property type="organism name" value="mouse"/>
</dbReference>
<dbReference type="AGR" id="MGI:96891"/>
<dbReference type="CTD" id="4066"/>
<dbReference type="MGI" id="MGI:96891">
    <property type="gene designation" value="Lyl1"/>
</dbReference>
<dbReference type="VEuPathDB" id="HostDB:ENSMUSG00000034041"/>
<dbReference type="eggNOG" id="KOG4029">
    <property type="taxonomic scope" value="Eukaryota"/>
</dbReference>
<dbReference type="GeneTree" id="ENSGT00940000162404"/>
<dbReference type="HOGENOM" id="CLU_047980_1_0_1"/>
<dbReference type="InParanoid" id="P27792"/>
<dbReference type="OMA" id="HRVPDDG"/>
<dbReference type="OrthoDB" id="10069510at2759"/>
<dbReference type="PhylomeDB" id="P27792"/>
<dbReference type="TreeFam" id="TF315153"/>
<dbReference type="BioGRID-ORCS" id="17095">
    <property type="hits" value="4 hits in 77 CRISPR screens"/>
</dbReference>
<dbReference type="PRO" id="PR:P27792"/>
<dbReference type="Proteomes" id="UP000000589">
    <property type="component" value="Chromosome 8"/>
</dbReference>
<dbReference type="RNAct" id="P27792">
    <property type="molecule type" value="protein"/>
</dbReference>
<dbReference type="Bgee" id="ENSMUSG00000034041">
    <property type="expression patterns" value="Expressed in granulocyte and 166 other cell types or tissues"/>
</dbReference>
<dbReference type="ExpressionAtlas" id="P27792">
    <property type="expression patterns" value="baseline and differential"/>
</dbReference>
<dbReference type="GO" id="GO:0005634">
    <property type="term" value="C:nucleus"/>
    <property type="evidence" value="ECO:0007669"/>
    <property type="project" value="UniProtKB-SubCell"/>
</dbReference>
<dbReference type="GO" id="GO:0003677">
    <property type="term" value="F:DNA binding"/>
    <property type="evidence" value="ECO:0000250"/>
    <property type="project" value="UniProtKB"/>
</dbReference>
<dbReference type="GO" id="GO:0000981">
    <property type="term" value="F:DNA-binding transcription factor activity, RNA polymerase II-specific"/>
    <property type="evidence" value="ECO:0007669"/>
    <property type="project" value="InterPro"/>
</dbReference>
<dbReference type="GO" id="GO:0046983">
    <property type="term" value="F:protein dimerization activity"/>
    <property type="evidence" value="ECO:0007669"/>
    <property type="project" value="InterPro"/>
</dbReference>
<dbReference type="GO" id="GO:0030183">
    <property type="term" value="P:B cell differentiation"/>
    <property type="evidence" value="ECO:0000315"/>
    <property type="project" value="UniProtKB"/>
</dbReference>
<dbReference type="GO" id="GO:0001955">
    <property type="term" value="P:blood vessel maturation"/>
    <property type="evidence" value="ECO:0000250"/>
    <property type="project" value="UniProtKB"/>
</dbReference>
<dbReference type="GO" id="GO:0060216">
    <property type="term" value="P:definitive hemopoiesis"/>
    <property type="evidence" value="ECO:0000315"/>
    <property type="project" value="UniProtKB"/>
</dbReference>
<dbReference type="GO" id="GO:0045893">
    <property type="term" value="P:positive regulation of DNA-templated transcription"/>
    <property type="evidence" value="ECO:0000250"/>
    <property type="project" value="UniProtKB"/>
</dbReference>
<dbReference type="GO" id="GO:0006355">
    <property type="term" value="P:regulation of DNA-templated transcription"/>
    <property type="evidence" value="ECO:0000250"/>
    <property type="project" value="UniProtKB"/>
</dbReference>
<dbReference type="CDD" id="cd19705">
    <property type="entry name" value="bHLH_TS_LYL1"/>
    <property type="match status" value="1"/>
</dbReference>
<dbReference type="FunFam" id="4.10.280.10:FF:000015">
    <property type="entry name" value="T-cell acute lymphocytic leukemia 1"/>
    <property type="match status" value="1"/>
</dbReference>
<dbReference type="Gene3D" id="4.10.280.10">
    <property type="entry name" value="Helix-loop-helix DNA-binding domain"/>
    <property type="match status" value="1"/>
</dbReference>
<dbReference type="InterPro" id="IPR011598">
    <property type="entry name" value="bHLH_dom"/>
</dbReference>
<dbReference type="InterPro" id="IPR036638">
    <property type="entry name" value="HLH_DNA-bd_sf"/>
</dbReference>
<dbReference type="InterPro" id="IPR040238">
    <property type="entry name" value="TAL-like"/>
</dbReference>
<dbReference type="PANTHER" id="PTHR13864:SF6">
    <property type="entry name" value="PROTEIN LYL-1"/>
    <property type="match status" value="1"/>
</dbReference>
<dbReference type="PANTHER" id="PTHR13864">
    <property type="entry name" value="T-CELL ACUTE LYMPHOCYTIC LEUKEMIA/STEM CELL LEUKEMIA-RELATED"/>
    <property type="match status" value="1"/>
</dbReference>
<dbReference type="Pfam" id="PF00010">
    <property type="entry name" value="HLH"/>
    <property type="match status" value="1"/>
</dbReference>
<dbReference type="SMART" id="SM00353">
    <property type="entry name" value="HLH"/>
    <property type="match status" value="1"/>
</dbReference>
<dbReference type="SUPFAM" id="SSF47459">
    <property type="entry name" value="HLH, helix-loop-helix DNA-binding domain"/>
    <property type="match status" value="1"/>
</dbReference>
<dbReference type="PROSITE" id="PS50888">
    <property type="entry name" value="BHLH"/>
    <property type="match status" value="1"/>
</dbReference>
<protein>
    <recommendedName>
        <fullName>Protein lyl-1</fullName>
    </recommendedName>
    <alternativeName>
        <fullName>Lymphoblastic leukemia-derived sequence 1</fullName>
    </alternativeName>
</protein>